<sequence>MNKLPHETRVVIGMSGGVDSSVAALLLKEQGYDVIGIFMKNWDDTDENGVCTATEDYNDVIEVCNQIGIPYYAVNFEKQYWDKVFTYFLDEYRAGRTPNPDVMCNKEIKFKAFLEHAMALGADYVATGHYARVAYMDGEYKMLRGVDDNKDQTYFLNQLGQEQLSKTMFPLGELKKPQIREMAKEAGLATATKKDSTGICFIGERNFKDFLSNYLPAQPGVMQTLSGEVKGKHDGLMYYTIGQRHGLGIGGNGDPWFVVGKNLKENILYVDQGFHNELLYGDEVIATNVNWVSDRAKEKEFKCTAKFRYRQEDNGVTVQIVDENTIRILCDEPIRAITPGQAVVFYDGDECLGGATIDEVYRSGEQLDYLG</sequence>
<comment type="function">
    <text evidence="1">Catalyzes the 2-thiolation of uridine at the wobble position (U34) of tRNA, leading to the formation of s(2)U34.</text>
</comment>
<comment type="catalytic activity">
    <reaction evidence="1">
        <text>S-sulfanyl-L-cysteinyl-[protein] + uridine(34) in tRNA + AH2 + ATP = 2-thiouridine(34) in tRNA + L-cysteinyl-[protein] + A + AMP + diphosphate + H(+)</text>
        <dbReference type="Rhea" id="RHEA:47032"/>
        <dbReference type="Rhea" id="RHEA-COMP:10131"/>
        <dbReference type="Rhea" id="RHEA-COMP:11726"/>
        <dbReference type="Rhea" id="RHEA-COMP:11727"/>
        <dbReference type="Rhea" id="RHEA-COMP:11728"/>
        <dbReference type="ChEBI" id="CHEBI:13193"/>
        <dbReference type="ChEBI" id="CHEBI:15378"/>
        <dbReference type="ChEBI" id="CHEBI:17499"/>
        <dbReference type="ChEBI" id="CHEBI:29950"/>
        <dbReference type="ChEBI" id="CHEBI:30616"/>
        <dbReference type="ChEBI" id="CHEBI:33019"/>
        <dbReference type="ChEBI" id="CHEBI:61963"/>
        <dbReference type="ChEBI" id="CHEBI:65315"/>
        <dbReference type="ChEBI" id="CHEBI:87170"/>
        <dbReference type="ChEBI" id="CHEBI:456215"/>
        <dbReference type="EC" id="2.8.1.13"/>
    </reaction>
</comment>
<comment type="subcellular location">
    <subcellularLocation>
        <location evidence="1">Cytoplasm</location>
    </subcellularLocation>
</comment>
<comment type="similarity">
    <text evidence="1">Belongs to the MnmA/TRMU family.</text>
</comment>
<organism>
    <name type="scientific">Bacillus cytotoxicus (strain DSM 22905 / CIP 110041 / 391-98 / NVH 391-98)</name>
    <dbReference type="NCBI Taxonomy" id="315749"/>
    <lineage>
        <taxon>Bacteria</taxon>
        <taxon>Bacillati</taxon>
        <taxon>Bacillota</taxon>
        <taxon>Bacilli</taxon>
        <taxon>Bacillales</taxon>
        <taxon>Bacillaceae</taxon>
        <taxon>Bacillus</taxon>
        <taxon>Bacillus cereus group</taxon>
    </lineage>
</organism>
<keyword id="KW-0067">ATP-binding</keyword>
<keyword id="KW-0963">Cytoplasm</keyword>
<keyword id="KW-1015">Disulfide bond</keyword>
<keyword id="KW-0547">Nucleotide-binding</keyword>
<keyword id="KW-0694">RNA-binding</keyword>
<keyword id="KW-0808">Transferase</keyword>
<keyword id="KW-0819">tRNA processing</keyword>
<keyword id="KW-0820">tRNA-binding</keyword>
<gene>
    <name evidence="1" type="primary">mnmA</name>
    <name type="synonym">trmU</name>
    <name type="ordered locus">Bcer98_3108</name>
</gene>
<dbReference type="EC" id="2.8.1.13" evidence="1"/>
<dbReference type="EMBL" id="CP000764">
    <property type="protein sequence ID" value="ABS23332.1"/>
    <property type="molecule type" value="Genomic_DNA"/>
</dbReference>
<dbReference type="RefSeq" id="WP_012095569.1">
    <property type="nucleotide sequence ID" value="NC_009674.1"/>
</dbReference>
<dbReference type="SMR" id="A7GT74"/>
<dbReference type="STRING" id="315749.Bcer98_3108"/>
<dbReference type="GeneID" id="33898355"/>
<dbReference type="KEGG" id="bcy:Bcer98_3108"/>
<dbReference type="eggNOG" id="COG0482">
    <property type="taxonomic scope" value="Bacteria"/>
</dbReference>
<dbReference type="HOGENOM" id="CLU_035188_1_0_9"/>
<dbReference type="OrthoDB" id="9800696at2"/>
<dbReference type="Proteomes" id="UP000002300">
    <property type="component" value="Chromosome"/>
</dbReference>
<dbReference type="GO" id="GO:0005737">
    <property type="term" value="C:cytoplasm"/>
    <property type="evidence" value="ECO:0007669"/>
    <property type="project" value="UniProtKB-SubCell"/>
</dbReference>
<dbReference type="GO" id="GO:0005524">
    <property type="term" value="F:ATP binding"/>
    <property type="evidence" value="ECO:0007669"/>
    <property type="project" value="UniProtKB-KW"/>
</dbReference>
<dbReference type="GO" id="GO:0000049">
    <property type="term" value="F:tRNA binding"/>
    <property type="evidence" value="ECO:0007669"/>
    <property type="project" value="UniProtKB-KW"/>
</dbReference>
<dbReference type="GO" id="GO:0103016">
    <property type="term" value="F:tRNA-uridine 2-sulfurtransferase activity"/>
    <property type="evidence" value="ECO:0007669"/>
    <property type="project" value="UniProtKB-EC"/>
</dbReference>
<dbReference type="GO" id="GO:0002143">
    <property type="term" value="P:tRNA wobble position uridine thiolation"/>
    <property type="evidence" value="ECO:0007669"/>
    <property type="project" value="TreeGrafter"/>
</dbReference>
<dbReference type="CDD" id="cd01998">
    <property type="entry name" value="MnmA_TRMU-like"/>
    <property type="match status" value="1"/>
</dbReference>
<dbReference type="FunFam" id="2.30.30.280:FF:000001">
    <property type="entry name" value="tRNA-specific 2-thiouridylase MnmA"/>
    <property type="match status" value="1"/>
</dbReference>
<dbReference type="FunFam" id="2.40.30.10:FF:000023">
    <property type="entry name" value="tRNA-specific 2-thiouridylase MnmA"/>
    <property type="match status" value="1"/>
</dbReference>
<dbReference type="FunFam" id="3.40.50.620:FF:000004">
    <property type="entry name" value="tRNA-specific 2-thiouridylase MnmA"/>
    <property type="match status" value="1"/>
</dbReference>
<dbReference type="Gene3D" id="2.30.30.280">
    <property type="entry name" value="Adenine nucleotide alpha hydrolases-like domains"/>
    <property type="match status" value="1"/>
</dbReference>
<dbReference type="Gene3D" id="3.40.50.620">
    <property type="entry name" value="HUPs"/>
    <property type="match status" value="1"/>
</dbReference>
<dbReference type="Gene3D" id="2.40.30.10">
    <property type="entry name" value="Translation factors"/>
    <property type="match status" value="1"/>
</dbReference>
<dbReference type="HAMAP" id="MF_00144">
    <property type="entry name" value="tRNA_thiouridyl_MnmA"/>
    <property type="match status" value="1"/>
</dbReference>
<dbReference type="InterPro" id="IPR004506">
    <property type="entry name" value="MnmA-like"/>
</dbReference>
<dbReference type="InterPro" id="IPR046885">
    <property type="entry name" value="MnmA-like_C"/>
</dbReference>
<dbReference type="InterPro" id="IPR046884">
    <property type="entry name" value="MnmA-like_central"/>
</dbReference>
<dbReference type="InterPro" id="IPR023382">
    <property type="entry name" value="MnmA-like_central_sf"/>
</dbReference>
<dbReference type="InterPro" id="IPR014729">
    <property type="entry name" value="Rossmann-like_a/b/a_fold"/>
</dbReference>
<dbReference type="NCBIfam" id="NF001138">
    <property type="entry name" value="PRK00143.1"/>
    <property type="match status" value="1"/>
</dbReference>
<dbReference type="NCBIfam" id="TIGR00420">
    <property type="entry name" value="trmU"/>
    <property type="match status" value="1"/>
</dbReference>
<dbReference type="PANTHER" id="PTHR11933:SF5">
    <property type="entry name" value="MITOCHONDRIAL TRNA-SPECIFIC 2-THIOURIDYLASE 1"/>
    <property type="match status" value="1"/>
</dbReference>
<dbReference type="PANTHER" id="PTHR11933">
    <property type="entry name" value="TRNA 5-METHYLAMINOMETHYL-2-THIOURIDYLATE -METHYLTRANSFERASE"/>
    <property type="match status" value="1"/>
</dbReference>
<dbReference type="Pfam" id="PF03054">
    <property type="entry name" value="tRNA_Me_trans"/>
    <property type="match status" value="1"/>
</dbReference>
<dbReference type="Pfam" id="PF20258">
    <property type="entry name" value="tRNA_Me_trans_C"/>
    <property type="match status" value="1"/>
</dbReference>
<dbReference type="Pfam" id="PF20259">
    <property type="entry name" value="tRNA_Me_trans_M"/>
    <property type="match status" value="1"/>
</dbReference>
<dbReference type="SUPFAM" id="SSF52402">
    <property type="entry name" value="Adenine nucleotide alpha hydrolases-like"/>
    <property type="match status" value="1"/>
</dbReference>
<evidence type="ECO:0000255" key="1">
    <source>
        <dbReference type="HAMAP-Rule" id="MF_00144"/>
    </source>
</evidence>
<name>MNMA_BACCN</name>
<feature type="chain" id="PRO_1000076557" description="tRNA-specific 2-thiouridylase MnmA">
    <location>
        <begin position="1"/>
        <end position="371"/>
    </location>
</feature>
<feature type="region of interest" description="Interaction with target base in tRNA" evidence="1">
    <location>
        <begin position="99"/>
        <end position="101"/>
    </location>
</feature>
<feature type="region of interest" description="Interaction with tRNA" evidence="1">
    <location>
        <begin position="150"/>
        <end position="152"/>
    </location>
</feature>
<feature type="region of interest" description="Interaction with tRNA" evidence="1">
    <location>
        <begin position="308"/>
        <end position="309"/>
    </location>
</feature>
<feature type="active site" description="Nucleophile" evidence="1">
    <location>
        <position position="104"/>
    </location>
</feature>
<feature type="active site" description="Cysteine persulfide intermediate" evidence="1">
    <location>
        <position position="200"/>
    </location>
</feature>
<feature type="binding site" evidence="1">
    <location>
        <begin position="13"/>
        <end position="20"/>
    </location>
    <ligand>
        <name>ATP</name>
        <dbReference type="ChEBI" id="CHEBI:30616"/>
    </ligand>
</feature>
<feature type="binding site" evidence="1">
    <location>
        <position position="39"/>
    </location>
    <ligand>
        <name>ATP</name>
        <dbReference type="ChEBI" id="CHEBI:30616"/>
    </ligand>
</feature>
<feature type="binding site" evidence="1">
    <location>
        <position position="128"/>
    </location>
    <ligand>
        <name>ATP</name>
        <dbReference type="ChEBI" id="CHEBI:30616"/>
    </ligand>
</feature>
<feature type="site" description="Interaction with tRNA" evidence="1">
    <location>
        <position position="129"/>
    </location>
</feature>
<feature type="site" description="Interaction with tRNA" evidence="1">
    <location>
        <position position="341"/>
    </location>
</feature>
<feature type="disulfide bond" description="Alternate" evidence="1">
    <location>
        <begin position="104"/>
        <end position="200"/>
    </location>
</feature>
<reference key="1">
    <citation type="journal article" date="2008" name="Chem. Biol. Interact.">
        <title>Extending the Bacillus cereus group genomics to putative food-borne pathogens of different toxicity.</title>
        <authorList>
            <person name="Lapidus A."/>
            <person name="Goltsman E."/>
            <person name="Auger S."/>
            <person name="Galleron N."/>
            <person name="Segurens B."/>
            <person name="Dossat C."/>
            <person name="Land M.L."/>
            <person name="Broussolle V."/>
            <person name="Brillard J."/>
            <person name="Guinebretiere M.-H."/>
            <person name="Sanchis V."/>
            <person name="Nguen-the C."/>
            <person name="Lereclus D."/>
            <person name="Richardson P."/>
            <person name="Wincker P."/>
            <person name="Weissenbach J."/>
            <person name="Ehrlich S.D."/>
            <person name="Sorokin A."/>
        </authorList>
    </citation>
    <scope>NUCLEOTIDE SEQUENCE [LARGE SCALE GENOMIC DNA]</scope>
    <source>
        <strain>DSM 22905 / CIP 110041 / 391-98 / NVH 391-98</strain>
    </source>
</reference>
<protein>
    <recommendedName>
        <fullName evidence="1">tRNA-specific 2-thiouridylase MnmA</fullName>
        <ecNumber evidence="1">2.8.1.13</ecNumber>
    </recommendedName>
</protein>
<proteinExistence type="inferred from homology"/>
<accession>A7GT74</accession>